<gene>
    <name type="primary">ATG4</name>
    <name type="ordered locus">CAALFM_CR03220CA</name>
    <name type="ORF">CaO19.2401</name>
    <name type="ORF">CaO19.9938</name>
</gene>
<organism>
    <name type="scientific">Candida albicans (strain SC5314 / ATCC MYA-2876)</name>
    <name type="common">Yeast</name>
    <dbReference type="NCBI Taxonomy" id="237561"/>
    <lineage>
        <taxon>Eukaryota</taxon>
        <taxon>Fungi</taxon>
        <taxon>Dikarya</taxon>
        <taxon>Ascomycota</taxon>
        <taxon>Saccharomycotina</taxon>
        <taxon>Pichiomycetes</taxon>
        <taxon>Debaryomycetaceae</taxon>
        <taxon>Candida/Lodderomyces clade</taxon>
        <taxon>Candida</taxon>
    </lineage>
</organism>
<proteinExistence type="inferred from homology"/>
<protein>
    <recommendedName>
        <fullName>Cysteine protease ATG4</fullName>
        <ecNumber>3.4.22.-</ecNumber>
    </recommendedName>
    <alternativeName>
        <fullName>Autophagy-related protein 4</fullName>
    </alternativeName>
</protein>
<feature type="chain" id="PRO_0000215858" description="Cysteine protease ATG4">
    <location>
        <begin position="1"/>
        <end position="446"/>
    </location>
</feature>
<feature type="region of interest" description="Disordered" evidence="3">
    <location>
        <begin position="1"/>
        <end position="23"/>
    </location>
</feature>
<feature type="region of interest" description="Disordered" evidence="3">
    <location>
        <begin position="412"/>
        <end position="446"/>
    </location>
</feature>
<feature type="compositionally biased region" description="Polar residues" evidence="3">
    <location>
        <begin position="1"/>
        <end position="19"/>
    </location>
</feature>
<feature type="compositionally biased region" description="Polar residues" evidence="3">
    <location>
        <begin position="412"/>
        <end position="424"/>
    </location>
</feature>
<feature type="compositionally biased region" description="Low complexity" evidence="3">
    <location>
        <begin position="436"/>
        <end position="446"/>
    </location>
</feature>
<feature type="active site" description="Nucleophile" evidence="2">
    <location>
        <position position="145"/>
    </location>
</feature>
<feature type="active site" evidence="2">
    <location>
        <position position="314"/>
    </location>
</feature>
<feature type="active site" evidence="2">
    <location>
        <position position="316"/>
    </location>
</feature>
<keyword id="KW-0072">Autophagy</keyword>
<keyword id="KW-0963">Cytoplasm</keyword>
<keyword id="KW-0378">Hydrolase</keyword>
<keyword id="KW-0539">Nucleus</keyword>
<keyword id="KW-0645">Protease</keyword>
<keyword id="KW-0653">Protein transport</keyword>
<keyword id="KW-1185">Reference proteome</keyword>
<keyword id="KW-0788">Thiol protease</keyword>
<keyword id="KW-0813">Transport</keyword>
<dbReference type="EC" id="3.4.22.-"/>
<dbReference type="EMBL" id="CP017630">
    <property type="protein sequence ID" value="AOW31060.1"/>
    <property type="molecule type" value="Genomic_DNA"/>
</dbReference>
<dbReference type="RefSeq" id="XP_713234.2">
    <property type="nucleotide sequence ID" value="XM_708141.2"/>
</dbReference>
<dbReference type="SMR" id="Q59UG3"/>
<dbReference type="FunCoup" id="Q59UG3">
    <property type="interactions" value="328"/>
</dbReference>
<dbReference type="STRING" id="237561.Q59UG3"/>
<dbReference type="MEROPS" id="C54.001"/>
<dbReference type="EnsemblFungi" id="CR_03220C_A-T">
    <property type="protein sequence ID" value="CR_03220C_A-T-p1"/>
    <property type="gene ID" value="CR_03220C_A"/>
</dbReference>
<dbReference type="GeneID" id="3645128"/>
<dbReference type="KEGG" id="cal:CAALFM_CR03220CA"/>
<dbReference type="CGD" id="CAL0000174445">
    <property type="gene designation" value="orf19.9938"/>
</dbReference>
<dbReference type="VEuPathDB" id="FungiDB:CR_03220C_A"/>
<dbReference type="eggNOG" id="KOG2674">
    <property type="taxonomic scope" value="Eukaryota"/>
</dbReference>
<dbReference type="HOGENOM" id="CLU_021259_5_2_1"/>
<dbReference type="InParanoid" id="Q59UG3"/>
<dbReference type="OrthoDB" id="2960936at2759"/>
<dbReference type="PRO" id="PR:Q59UG3"/>
<dbReference type="Proteomes" id="UP000000559">
    <property type="component" value="Chromosome R"/>
</dbReference>
<dbReference type="GO" id="GO:0005737">
    <property type="term" value="C:cytoplasm"/>
    <property type="evidence" value="ECO:0000318"/>
    <property type="project" value="GO_Central"/>
</dbReference>
<dbReference type="GO" id="GO:0005634">
    <property type="term" value="C:nucleus"/>
    <property type="evidence" value="ECO:0007669"/>
    <property type="project" value="UniProtKB-SubCell"/>
</dbReference>
<dbReference type="GO" id="GO:0000407">
    <property type="term" value="C:phagophore assembly site"/>
    <property type="evidence" value="ECO:0007669"/>
    <property type="project" value="UniProtKB-SubCell"/>
</dbReference>
<dbReference type="GO" id="GO:0004197">
    <property type="term" value="F:cysteine-type endopeptidase activity"/>
    <property type="evidence" value="ECO:0000318"/>
    <property type="project" value="GO_Central"/>
</dbReference>
<dbReference type="GO" id="GO:0019786">
    <property type="term" value="F:protein-phosphatidylethanolamide deconjugating activity"/>
    <property type="evidence" value="ECO:0000318"/>
    <property type="project" value="GO_Central"/>
</dbReference>
<dbReference type="GO" id="GO:0035973">
    <property type="term" value="P:aggrephagy"/>
    <property type="evidence" value="ECO:0000318"/>
    <property type="project" value="GO_Central"/>
</dbReference>
<dbReference type="GO" id="GO:0000045">
    <property type="term" value="P:autophagosome assembly"/>
    <property type="evidence" value="ECO:0000318"/>
    <property type="project" value="GO_Central"/>
</dbReference>
<dbReference type="GO" id="GO:0000423">
    <property type="term" value="P:mitophagy"/>
    <property type="evidence" value="ECO:0000318"/>
    <property type="project" value="GO_Central"/>
</dbReference>
<dbReference type="GO" id="GO:0034727">
    <property type="term" value="P:piecemeal microautophagy of the nucleus"/>
    <property type="evidence" value="ECO:0000318"/>
    <property type="project" value="GO_Central"/>
</dbReference>
<dbReference type="GO" id="GO:0016485">
    <property type="term" value="P:protein processing"/>
    <property type="evidence" value="ECO:0000318"/>
    <property type="project" value="GO_Central"/>
</dbReference>
<dbReference type="GO" id="GO:0015031">
    <property type="term" value="P:protein transport"/>
    <property type="evidence" value="ECO:0007669"/>
    <property type="project" value="UniProtKB-KW"/>
</dbReference>
<dbReference type="InterPro" id="IPR038765">
    <property type="entry name" value="Papain-like_cys_pep_sf"/>
</dbReference>
<dbReference type="InterPro" id="IPR005078">
    <property type="entry name" value="Peptidase_C54"/>
</dbReference>
<dbReference type="InterPro" id="IPR046792">
    <property type="entry name" value="Peptidase_C54_cat"/>
</dbReference>
<dbReference type="PANTHER" id="PTHR22624:SF49">
    <property type="entry name" value="CYSTEINE PROTEASE"/>
    <property type="match status" value="1"/>
</dbReference>
<dbReference type="PANTHER" id="PTHR22624">
    <property type="entry name" value="CYSTEINE PROTEASE ATG4"/>
    <property type="match status" value="1"/>
</dbReference>
<dbReference type="Pfam" id="PF03416">
    <property type="entry name" value="Peptidase_C54"/>
    <property type="match status" value="1"/>
</dbReference>
<dbReference type="SUPFAM" id="SSF54001">
    <property type="entry name" value="Cysteine proteinases"/>
    <property type="match status" value="1"/>
</dbReference>
<name>ATG4_CANAL</name>
<evidence type="ECO:0000250" key="1">
    <source>
        <dbReference type="UniProtKB" id="P53867"/>
    </source>
</evidence>
<evidence type="ECO:0000250" key="2">
    <source>
        <dbReference type="UniProtKB" id="Q9Y4P1"/>
    </source>
</evidence>
<evidence type="ECO:0000256" key="3">
    <source>
        <dbReference type="SAM" id="MobiDB-lite"/>
    </source>
</evidence>
<evidence type="ECO:0000305" key="4"/>
<reference key="1">
    <citation type="journal article" date="2004" name="Proc. Natl. Acad. Sci. U.S.A.">
        <title>The diploid genome sequence of Candida albicans.</title>
        <authorList>
            <person name="Jones T."/>
            <person name="Federspiel N.A."/>
            <person name="Chibana H."/>
            <person name="Dungan J."/>
            <person name="Kalman S."/>
            <person name="Magee B.B."/>
            <person name="Newport G."/>
            <person name="Thorstenson Y.R."/>
            <person name="Agabian N."/>
            <person name="Magee P.T."/>
            <person name="Davis R.W."/>
            <person name="Scherer S."/>
        </authorList>
    </citation>
    <scope>NUCLEOTIDE SEQUENCE [LARGE SCALE GENOMIC DNA]</scope>
    <source>
        <strain>SC5314 / ATCC MYA-2876</strain>
    </source>
</reference>
<reference key="2">
    <citation type="journal article" date="2007" name="Genome Biol.">
        <title>Assembly of the Candida albicans genome into sixteen supercontigs aligned on the eight chromosomes.</title>
        <authorList>
            <person name="van het Hoog M."/>
            <person name="Rast T.J."/>
            <person name="Martchenko M."/>
            <person name="Grindle S."/>
            <person name="Dignard D."/>
            <person name="Hogues H."/>
            <person name="Cuomo C."/>
            <person name="Berriman M."/>
            <person name="Scherer S."/>
            <person name="Magee B.B."/>
            <person name="Whiteway M."/>
            <person name="Chibana H."/>
            <person name="Nantel A."/>
            <person name="Magee P.T."/>
        </authorList>
    </citation>
    <scope>GENOME REANNOTATION</scope>
    <source>
        <strain>SC5314 / ATCC MYA-2876</strain>
    </source>
</reference>
<reference key="3">
    <citation type="journal article" date="2013" name="Genome Biol.">
        <title>Assembly of a phased diploid Candida albicans genome facilitates allele-specific measurements and provides a simple model for repeat and indel structure.</title>
        <authorList>
            <person name="Muzzey D."/>
            <person name="Schwartz K."/>
            <person name="Weissman J.S."/>
            <person name="Sherlock G."/>
        </authorList>
    </citation>
    <scope>NUCLEOTIDE SEQUENCE [LARGE SCALE GENOMIC DNA]</scope>
    <scope>GENOME REANNOTATION</scope>
    <source>
        <strain>SC5314 / ATCC MYA-2876</strain>
    </source>
</reference>
<accession>Q59UG3</accession>
<accession>A0A1D8PSG2</accession>
<accession>Q59UL5</accession>
<comment type="function">
    <text evidence="1">Cysteine protease that plays a key role in cytoplasm to vacuole transport (Cvt) and autophagy by mediating both proteolytic activation and delipidation of ATG8. Required for selective autophagic degradation of the nucleus (nucleophagy) as well as for mitophagy which contributes to regulate mitochondrial quantity and quality by eliminating the mitochondria to a basal level to fulfill cellular energy requirements and preventing excess ROS production. The protease activity is required for proteolytic activation of ATG8: cleaves the C-terminal amino acid of ATG8 to reveal a C-terminal glycine. ATG8 ubiquitin-like activity requires the exposure of the glycine at the C-terminus for its conjugation to phosphatidylethanolamine (PE) and its insertion to membranes, which is necessary for autophagy. The ATG8-PE conjugate mediates tethering between adjacent membranes and stimulates membrane hemifusion, leading to expansion of the autophagosomal membrane during autophagy. In addition to the protease activity, also catalyzes deconjugation of PE-conjugated forms of ATG8 during macroautophagy: ATG8 delipidation is required to release the protein from membranes, which facilitates multiple events during macroautophagy, and especially for efficient autophagosome biogenesis, the assembly of ATG9-containing tubulovesicular clusters into phagophores/autophagosomes, and for the disassembly of PAS-associated ATG components. ATG8 delipidation by ATG4 also recycles ATG8-PE generated on inappropriate membranes to maintain a reservoir of unlipidated ATG8 that is required for autophagosome formation at the PAS.</text>
</comment>
<comment type="catalytic activity">
    <reaction evidence="1">
        <text>[protein]-C-terminal L-amino acid-glycyl-phosphatidylethanolamide + H2O = [protein]-C-terminal L-amino acid-glycine + a 1,2-diacyl-sn-glycero-3-phosphoethanolamine</text>
        <dbReference type="Rhea" id="RHEA:67548"/>
        <dbReference type="Rhea" id="RHEA-COMP:17323"/>
        <dbReference type="Rhea" id="RHEA-COMP:17324"/>
        <dbReference type="ChEBI" id="CHEBI:15377"/>
        <dbReference type="ChEBI" id="CHEBI:64612"/>
        <dbReference type="ChEBI" id="CHEBI:172940"/>
        <dbReference type="ChEBI" id="CHEBI:172941"/>
    </reaction>
    <physiologicalReaction direction="left-to-right" evidence="1">
        <dbReference type="Rhea" id="RHEA:67549"/>
    </physiologicalReaction>
</comment>
<comment type="subcellular location">
    <subcellularLocation>
        <location evidence="1">Cytoplasm</location>
    </subcellularLocation>
    <subcellularLocation>
        <location evidence="1">Nucleus</location>
    </subcellularLocation>
    <subcellularLocation>
        <location evidence="1">Preautophagosomal structure</location>
    </subcellularLocation>
</comment>
<comment type="similarity">
    <text evidence="4">Belongs to the peptidase C54 family.</text>
</comment>
<sequence>MNQPNPNKQPIVQSTSEQTSNEEVDTVLGRFTLFVKDLSNGLNGSQEVPPSQESVSEEAEVISRKIIVLGQTFDNFDNANDYIESKLWLSYRCGFEPIPKSIDGPQPIQFFPSIIFNRSTIYSNFANLKSLFDKENFTSDAGWGCMIRTSQNLLANTLLKLYPKNEPEIVKLFQDDTSSPFSIHNFIRVASLSPLHVKPGEWFGPNAASLSIKRLASELLQDQEIDGIKIPRVFISENSDLFDDEIRDVFAKEKNASVLILFPIRLGIDKVNSYYYNSIFHLLASKYSCGIAGGKPSSSFYFLGYEDTDLIYFDPHLPQVVETPINMDSYHTTNYNRLNISLLDPSMMIGILVTNIDEYIDFKTSCLDINNKIVHFHPHTLPVQQDSIINQSWEEVQDEEEEFINLNVSKIENEQQQEQGQSTDAPDEFIDIGNQSSSVVSVPSNV</sequence>